<organism>
    <name type="scientific">Schistosoma mansoni</name>
    <name type="common">Blood fluke</name>
    <dbReference type="NCBI Taxonomy" id="6183"/>
    <lineage>
        <taxon>Eukaryota</taxon>
        <taxon>Metazoa</taxon>
        <taxon>Spiralia</taxon>
        <taxon>Lophotrochozoa</taxon>
        <taxon>Platyhelminthes</taxon>
        <taxon>Trematoda</taxon>
        <taxon>Digenea</taxon>
        <taxon>Strigeidida</taxon>
        <taxon>Schistosomatoidea</taxon>
        <taxon>Schistosomatidae</taxon>
        <taxon>Schistosoma</taxon>
    </lineage>
</organism>
<feature type="signal peptide">
    <location>
        <begin position="1"/>
        <end position="35"/>
    </location>
</feature>
<feature type="chain" id="PRO_0000022367" description="Antigenic integral membrane glycoprotein">
    <location>
        <begin position="36"/>
        <end position="182"/>
    </location>
</feature>
<feature type="transmembrane region" description="Helical" evidence="1">
    <location>
        <begin position="162"/>
        <end position="180"/>
    </location>
</feature>
<feature type="lipid moiety-binding region" description="S-palmitoyl cysteine" evidence="2">
    <location>
        <position position="168"/>
    </location>
</feature>
<feature type="glycosylation site" description="N-linked (GlcNAc...) asparagine">
    <location>
        <position position="88"/>
    </location>
</feature>
<feature type="glycosylation site" description="N-linked (GlcNAc...) asparagine">
    <location>
        <position position="120"/>
    </location>
</feature>
<name>SM25_SCHMA</name>
<comment type="function">
    <text>Major antigen in the surface tegument.</text>
</comment>
<comment type="subcellular location">
    <subcellularLocation>
        <location evidence="3">Cell membrane</location>
        <topology evidence="3">Single-pass membrane protein</topology>
    </subcellularLocation>
    <subcellularLocation>
        <location>Cell membrane</location>
        <topology>Lipid-anchor</topology>
    </subcellularLocation>
</comment>
<reference key="1">
    <citation type="journal article" date="1991" name="Mol. Biochem. Parasitol.">
        <title>Structure of Sm25, an antigenic integral membrane glycoprotein of adult Schistosoma mansoni.</title>
        <authorList>
            <person name="Omer Ali P."/>
            <person name="Jeffs S.A."/>
            <person name="Meadows H.M."/>
            <person name="Hollyer T."/>
            <person name="Owen C."/>
            <person name="Hackett F."/>
            <person name="Smithers S.R."/>
            <person name="Simpson A.J.G."/>
        </authorList>
    </citation>
    <scope>NUCLEOTIDE SEQUENCE [MRNA]</scope>
    <source>
        <strain>Puerto Rican</strain>
    </source>
</reference>
<reference key="2">
    <citation type="journal article" date="1991" name="EMBO J.">
        <title>Sm25, a major schistosome tegumental glycoprotein, is dependent on palmitic acid for membrane attachment.</title>
        <authorList>
            <person name="Pearce E.J."/>
            <person name="Magee A.I."/>
            <person name="Smithers S.R."/>
            <person name="Simpson A.J.G."/>
        </authorList>
    </citation>
    <scope>PALMITOYLATION AT CYS-168</scope>
</reference>
<evidence type="ECO:0000255" key="1"/>
<evidence type="ECO:0000269" key="2">
    <source>
    </source>
</evidence>
<evidence type="ECO:0000305" key="3"/>
<sequence>MFSFHERMKKKHVTIRVYKHERILVFLFVLFISTTDFSTEIIMIQTINWIVWKLFIIYISLDLFSLKLVNSEENSNSIITDEDYDHYNSSLDSSNNVKHSQEAFHRNSDPDGFPEYEFLNETSIEIKEELGQELHQLQLILDELSRRIRATPNSANKYMKNEFLMSSCIVITLNLFIFMYKS</sequence>
<accession>P23126</accession>
<keyword id="KW-1003">Cell membrane</keyword>
<keyword id="KW-0325">Glycoprotein</keyword>
<keyword id="KW-0449">Lipoprotein</keyword>
<keyword id="KW-0472">Membrane</keyword>
<keyword id="KW-0564">Palmitate</keyword>
<keyword id="KW-1185">Reference proteome</keyword>
<keyword id="KW-0732">Signal</keyword>
<keyword id="KW-0812">Transmembrane</keyword>
<keyword id="KW-1133">Transmembrane helix</keyword>
<proteinExistence type="evidence at protein level"/>
<dbReference type="EMBL" id="M37004">
    <property type="protein sequence ID" value="AAA29924.1"/>
    <property type="molecule type" value="mRNA"/>
</dbReference>
<dbReference type="HOGENOM" id="CLU_1483798_0_0_1"/>
<dbReference type="InParanoid" id="P23126"/>
<dbReference type="Proteomes" id="UP000008854">
    <property type="component" value="Unassembled WGS sequence"/>
</dbReference>
<dbReference type="GO" id="GO:0005886">
    <property type="term" value="C:plasma membrane"/>
    <property type="evidence" value="ECO:0007669"/>
    <property type="project" value="UniProtKB-SubCell"/>
</dbReference>
<protein>
    <recommendedName>
        <fullName>Antigenic integral membrane glycoprotein</fullName>
    </recommendedName>
    <alternativeName>
        <fullName>Antigen Sm25</fullName>
    </alternativeName>
</protein>